<feature type="chain" id="PRO_1000066536" description="FMN-dependent NADH:quinone oxidoreductase">
    <location>
        <begin position="1"/>
        <end position="201"/>
    </location>
</feature>
<feature type="binding site" evidence="1">
    <location>
        <position position="10"/>
    </location>
    <ligand>
        <name>FMN</name>
        <dbReference type="ChEBI" id="CHEBI:58210"/>
    </ligand>
</feature>
<feature type="binding site" evidence="1">
    <location>
        <begin position="16"/>
        <end position="18"/>
    </location>
    <ligand>
        <name>FMN</name>
        <dbReference type="ChEBI" id="CHEBI:58210"/>
    </ligand>
</feature>
<feature type="binding site" evidence="1">
    <location>
        <begin position="96"/>
        <end position="99"/>
    </location>
    <ligand>
        <name>FMN</name>
        <dbReference type="ChEBI" id="CHEBI:58210"/>
    </ligand>
</feature>
<feature type="binding site" evidence="1">
    <location>
        <begin position="140"/>
        <end position="143"/>
    </location>
    <ligand>
        <name>FMN</name>
        <dbReference type="ChEBI" id="CHEBI:58210"/>
    </ligand>
</feature>
<keyword id="KW-0285">Flavoprotein</keyword>
<keyword id="KW-0288">FMN</keyword>
<keyword id="KW-0520">NAD</keyword>
<keyword id="KW-0560">Oxidoreductase</keyword>
<proteinExistence type="inferred from homology"/>
<dbReference type="EC" id="1.6.5.-" evidence="1"/>
<dbReference type="EC" id="1.7.1.17" evidence="1"/>
<dbReference type="EMBL" id="CP000308">
    <property type="protein sequence ID" value="ABG13638.1"/>
    <property type="molecule type" value="Genomic_DNA"/>
</dbReference>
<dbReference type="RefSeq" id="WP_002211004.1">
    <property type="nucleotide sequence ID" value="NZ_CP009906.1"/>
</dbReference>
<dbReference type="SMR" id="Q1C7D4"/>
<dbReference type="GeneID" id="57976351"/>
<dbReference type="KEGG" id="ypa:YPA_1672"/>
<dbReference type="Proteomes" id="UP000001971">
    <property type="component" value="Chromosome"/>
</dbReference>
<dbReference type="GO" id="GO:0009055">
    <property type="term" value="F:electron transfer activity"/>
    <property type="evidence" value="ECO:0007669"/>
    <property type="project" value="UniProtKB-UniRule"/>
</dbReference>
<dbReference type="GO" id="GO:0010181">
    <property type="term" value="F:FMN binding"/>
    <property type="evidence" value="ECO:0007669"/>
    <property type="project" value="UniProtKB-UniRule"/>
</dbReference>
<dbReference type="GO" id="GO:0016652">
    <property type="term" value="F:oxidoreductase activity, acting on NAD(P)H as acceptor"/>
    <property type="evidence" value="ECO:0007669"/>
    <property type="project" value="UniProtKB-UniRule"/>
</dbReference>
<dbReference type="GO" id="GO:0016655">
    <property type="term" value="F:oxidoreductase activity, acting on NAD(P)H, quinone or similar compound as acceptor"/>
    <property type="evidence" value="ECO:0007669"/>
    <property type="project" value="InterPro"/>
</dbReference>
<dbReference type="FunFam" id="3.40.50.360:FF:000010">
    <property type="entry name" value="FMN-dependent NADH-azoreductase"/>
    <property type="match status" value="1"/>
</dbReference>
<dbReference type="Gene3D" id="3.40.50.360">
    <property type="match status" value="1"/>
</dbReference>
<dbReference type="HAMAP" id="MF_01216">
    <property type="entry name" value="Azoreductase_type1"/>
    <property type="match status" value="1"/>
</dbReference>
<dbReference type="InterPro" id="IPR003680">
    <property type="entry name" value="Flavodoxin_fold"/>
</dbReference>
<dbReference type="InterPro" id="IPR029039">
    <property type="entry name" value="Flavoprotein-like_sf"/>
</dbReference>
<dbReference type="InterPro" id="IPR050104">
    <property type="entry name" value="FMN-dep_NADH:Q_OxRdtase_AzoR1"/>
</dbReference>
<dbReference type="InterPro" id="IPR023048">
    <property type="entry name" value="NADH:quinone_OxRdtase_FMN_depd"/>
</dbReference>
<dbReference type="PANTHER" id="PTHR43741">
    <property type="entry name" value="FMN-DEPENDENT NADH-AZOREDUCTASE 1"/>
    <property type="match status" value="1"/>
</dbReference>
<dbReference type="PANTHER" id="PTHR43741:SF2">
    <property type="entry name" value="FMN-DEPENDENT NADH:QUINONE OXIDOREDUCTASE"/>
    <property type="match status" value="1"/>
</dbReference>
<dbReference type="Pfam" id="PF02525">
    <property type="entry name" value="Flavodoxin_2"/>
    <property type="match status" value="1"/>
</dbReference>
<dbReference type="SUPFAM" id="SSF52218">
    <property type="entry name" value="Flavoproteins"/>
    <property type="match status" value="1"/>
</dbReference>
<name>AZOR_YERPA</name>
<evidence type="ECO:0000255" key="1">
    <source>
        <dbReference type="HAMAP-Rule" id="MF_01216"/>
    </source>
</evidence>
<gene>
    <name evidence="1" type="primary">azoR</name>
    <name type="ordered locus">YPA_1672</name>
</gene>
<reference key="1">
    <citation type="journal article" date="2006" name="J. Bacteriol.">
        <title>Complete genome sequence of Yersinia pestis strains Antiqua and Nepal516: evidence of gene reduction in an emerging pathogen.</title>
        <authorList>
            <person name="Chain P.S.G."/>
            <person name="Hu P."/>
            <person name="Malfatti S.A."/>
            <person name="Radnedge L."/>
            <person name="Larimer F."/>
            <person name="Vergez L.M."/>
            <person name="Worsham P."/>
            <person name="Chu M.C."/>
            <person name="Andersen G.L."/>
        </authorList>
    </citation>
    <scope>NUCLEOTIDE SEQUENCE [LARGE SCALE GENOMIC DNA]</scope>
    <source>
        <strain>Antiqua</strain>
    </source>
</reference>
<organism>
    <name type="scientific">Yersinia pestis bv. Antiqua (strain Antiqua)</name>
    <dbReference type="NCBI Taxonomy" id="360102"/>
    <lineage>
        <taxon>Bacteria</taxon>
        <taxon>Pseudomonadati</taxon>
        <taxon>Pseudomonadota</taxon>
        <taxon>Gammaproteobacteria</taxon>
        <taxon>Enterobacterales</taxon>
        <taxon>Yersiniaceae</taxon>
        <taxon>Yersinia</taxon>
    </lineage>
</organism>
<comment type="function">
    <text evidence="1">Quinone reductase that provides resistance to thiol-specific stress caused by electrophilic quinones.</text>
</comment>
<comment type="function">
    <text evidence="1">Also exhibits azoreductase activity. Catalyzes the reductive cleavage of the azo bond in aromatic azo compounds to the corresponding amines.</text>
</comment>
<comment type="catalytic activity">
    <reaction evidence="1">
        <text>2 a quinone + NADH + H(+) = 2 a 1,4-benzosemiquinone + NAD(+)</text>
        <dbReference type="Rhea" id="RHEA:65952"/>
        <dbReference type="ChEBI" id="CHEBI:15378"/>
        <dbReference type="ChEBI" id="CHEBI:57540"/>
        <dbReference type="ChEBI" id="CHEBI:57945"/>
        <dbReference type="ChEBI" id="CHEBI:132124"/>
        <dbReference type="ChEBI" id="CHEBI:134225"/>
    </reaction>
</comment>
<comment type="catalytic activity">
    <reaction evidence="1">
        <text>N,N-dimethyl-1,4-phenylenediamine + anthranilate + 2 NAD(+) = 2-(4-dimethylaminophenyl)diazenylbenzoate + 2 NADH + 2 H(+)</text>
        <dbReference type="Rhea" id="RHEA:55872"/>
        <dbReference type="ChEBI" id="CHEBI:15378"/>
        <dbReference type="ChEBI" id="CHEBI:15783"/>
        <dbReference type="ChEBI" id="CHEBI:16567"/>
        <dbReference type="ChEBI" id="CHEBI:57540"/>
        <dbReference type="ChEBI" id="CHEBI:57945"/>
        <dbReference type="ChEBI" id="CHEBI:71579"/>
        <dbReference type="EC" id="1.7.1.17"/>
    </reaction>
</comment>
<comment type="cofactor">
    <cofactor evidence="1">
        <name>FMN</name>
        <dbReference type="ChEBI" id="CHEBI:58210"/>
    </cofactor>
    <text evidence="1">Binds 1 FMN per subunit.</text>
</comment>
<comment type="subunit">
    <text evidence="1">Homodimer.</text>
</comment>
<comment type="similarity">
    <text evidence="1">Belongs to the azoreductase type 1 family.</text>
</comment>
<accession>Q1C7D4</accession>
<protein>
    <recommendedName>
        <fullName evidence="1">FMN-dependent NADH:quinone oxidoreductase</fullName>
        <ecNumber evidence="1">1.6.5.-</ecNumber>
    </recommendedName>
    <alternativeName>
        <fullName evidence="1">Azo-dye reductase</fullName>
    </alternativeName>
    <alternativeName>
        <fullName evidence="1">FMN-dependent NADH-azo compound oxidoreductase</fullName>
    </alternativeName>
    <alternativeName>
        <fullName evidence="1">FMN-dependent NADH-azoreductase</fullName>
        <ecNumber evidence="1">1.7.1.17</ecNumber>
    </alternativeName>
</protein>
<sequence>MSKVLVLKSSILATSSQSNQLADFFVEQWQAAHAGDQITVRDLAAQPIPVLDGELVGALRPSGTALTPRQQEALALSDELIAELQANDVIVIAAPMYNFNIPTQLKNYFDMIARAGVTFRYTEKGPEGLVTGKRAIILTSRGGIHKDTPTDLVVPYLRLFLGFIGITDVEFVFAEGIAYGPEVATKAQADAKTLLAQVVAA</sequence>